<dbReference type="EMBL" id="Z48756">
    <property type="protein sequence ID" value="CAA88655.1"/>
    <property type="molecule type" value="Genomic_DNA"/>
</dbReference>
<dbReference type="PIR" id="S56059">
    <property type="entry name" value="S56059"/>
</dbReference>
<dbReference type="STRING" id="4932.YMR245W"/>
<dbReference type="PaxDb" id="4932-YMR245W"/>
<dbReference type="EnsemblFungi" id="YMR245W_mRNA">
    <property type="protein sequence ID" value="YMR245W"/>
    <property type="gene ID" value="YMR245W"/>
</dbReference>
<dbReference type="AGR" id="SGD:S000004859"/>
<dbReference type="SGD" id="S000004859">
    <property type="gene designation" value="YMR245W"/>
</dbReference>
<dbReference type="HOGENOM" id="CLU_1367194_0_0_1"/>
<dbReference type="OMA" id="PDNTIGH"/>
<dbReference type="BRENDA" id="5.6.1.5">
    <property type="organism ID" value="399"/>
</dbReference>
<comment type="miscellaneous">
    <text evidence="1">Partially overlaps YMR244C-A.</text>
</comment>
<comment type="caution">
    <text evidence="2">Product of a dubious gene prediction unlikely to encode a functional protein. Because of that it is not part of the S.cerevisiae S288c complete/reference proteome set.</text>
</comment>
<name>YM80_YEAST</name>
<proteinExistence type="uncertain"/>
<accession>Q04019</accession>
<protein>
    <recommendedName>
        <fullName>Putative uncharacterized protein YMR245W</fullName>
    </recommendedName>
</protein>
<organism>
    <name type="scientific">Saccharomyces cerevisiae (strain ATCC 204508 / S288c)</name>
    <name type="common">Baker's yeast</name>
    <dbReference type="NCBI Taxonomy" id="559292"/>
    <lineage>
        <taxon>Eukaryota</taxon>
        <taxon>Fungi</taxon>
        <taxon>Dikarya</taxon>
        <taxon>Ascomycota</taxon>
        <taxon>Saccharomycotina</taxon>
        <taxon>Saccharomycetes</taxon>
        <taxon>Saccharomycetales</taxon>
        <taxon>Saccharomycetaceae</taxon>
        <taxon>Saccharomyces</taxon>
    </lineage>
</organism>
<sequence length="206" mass="23194">MVCSLLKSMTLFSLKYLIQLWAQFSSNFSFSTLQCDFILLLFLGSIASKMSALSKHWKNASLDSQHNFLCERVLGGCDSFLPPSNENKPIAILLLFLSVYSCIYVPAQRYNSTRLCMYVCMYVGESSPPFYKAAPTTAAPFHMSVSFVQLSYNRQSHFLPRGRARFCWICSGANIPSRNGQGPDNTIGHLHHNAQGQKFIHDNNTN</sequence>
<reference key="1">
    <citation type="journal article" date="1997" name="Nature">
        <title>The nucleotide sequence of Saccharomyces cerevisiae chromosome XIII.</title>
        <authorList>
            <person name="Bowman S."/>
            <person name="Churcher C.M."/>
            <person name="Badcock K."/>
            <person name="Brown D."/>
            <person name="Chillingworth T."/>
            <person name="Connor R."/>
            <person name="Dedman K."/>
            <person name="Devlin K."/>
            <person name="Gentles S."/>
            <person name="Hamlin N."/>
            <person name="Hunt S."/>
            <person name="Jagels K."/>
            <person name="Lye G."/>
            <person name="Moule S."/>
            <person name="Odell C."/>
            <person name="Pearson D."/>
            <person name="Rajandream M.A."/>
            <person name="Rice P."/>
            <person name="Skelton J."/>
            <person name="Walsh S.V."/>
            <person name="Whitehead S."/>
            <person name="Barrell B.G."/>
        </authorList>
    </citation>
    <scope>NUCLEOTIDE SEQUENCE [LARGE SCALE GENOMIC DNA]</scope>
    <source>
        <strain>ATCC 204508 / S288c</strain>
    </source>
</reference>
<reference key="2">
    <citation type="journal article" date="2014" name="G3 (Bethesda)">
        <title>The reference genome sequence of Saccharomyces cerevisiae: Then and now.</title>
        <authorList>
            <person name="Engel S.R."/>
            <person name="Dietrich F.S."/>
            <person name="Fisk D.G."/>
            <person name="Binkley G."/>
            <person name="Balakrishnan R."/>
            <person name="Costanzo M.C."/>
            <person name="Dwight S.S."/>
            <person name="Hitz B.C."/>
            <person name="Karra K."/>
            <person name="Nash R.S."/>
            <person name="Weng S."/>
            <person name="Wong E.D."/>
            <person name="Lloyd P."/>
            <person name="Skrzypek M.S."/>
            <person name="Miyasato S.R."/>
            <person name="Simison M."/>
            <person name="Cherry J.M."/>
        </authorList>
    </citation>
    <scope>GENOME REANNOTATION</scope>
    <source>
        <strain>ATCC 204508 / S288c</strain>
    </source>
</reference>
<evidence type="ECO:0000305" key="1"/>
<evidence type="ECO:0000305" key="2">
    <source>
    </source>
</evidence>
<feature type="chain" id="PRO_0000203337" description="Putative uncharacterized protein YMR245W">
    <location>
        <begin position="1"/>
        <end position="206"/>
    </location>
</feature>
<gene>
    <name type="ordered locus">YMR245W</name>
    <name type="ORF">YM9408.07</name>
</gene>